<proteinExistence type="inferred from homology"/>
<protein>
    <recommendedName>
        <fullName evidence="1">Glutamate-1-semialdehyde 2,1-aminomutase</fullName>
        <shortName evidence="1">GSA</shortName>
        <ecNumber evidence="1">5.4.3.8</ecNumber>
    </recommendedName>
    <alternativeName>
        <fullName evidence="1">Glutamate-1-semialdehyde aminotransferase</fullName>
        <shortName evidence="1">GSA-AT</shortName>
    </alternativeName>
</protein>
<name>GSA_MANSM</name>
<gene>
    <name evidence="1" type="primary">hemL</name>
    <name type="ordered locus">MS0910</name>
</gene>
<feature type="chain" id="PRO_0000243583" description="Glutamate-1-semialdehyde 2,1-aminomutase">
    <location>
        <begin position="1"/>
        <end position="427"/>
    </location>
</feature>
<feature type="modified residue" description="N6-(pyridoxal phosphate)lysine" evidence="1">
    <location>
        <position position="265"/>
    </location>
</feature>
<keyword id="KW-0963">Cytoplasm</keyword>
<keyword id="KW-0413">Isomerase</keyword>
<keyword id="KW-0627">Porphyrin biosynthesis</keyword>
<keyword id="KW-0663">Pyridoxal phosphate</keyword>
<comment type="catalytic activity">
    <reaction evidence="1">
        <text>(S)-4-amino-5-oxopentanoate = 5-aminolevulinate</text>
        <dbReference type="Rhea" id="RHEA:14265"/>
        <dbReference type="ChEBI" id="CHEBI:57501"/>
        <dbReference type="ChEBI" id="CHEBI:356416"/>
        <dbReference type="EC" id="5.4.3.8"/>
    </reaction>
</comment>
<comment type="cofactor">
    <cofactor evidence="1">
        <name>pyridoxal 5'-phosphate</name>
        <dbReference type="ChEBI" id="CHEBI:597326"/>
    </cofactor>
</comment>
<comment type="pathway">
    <text evidence="1">Porphyrin-containing compound metabolism; protoporphyrin-IX biosynthesis; 5-aminolevulinate from L-glutamyl-tRNA(Glu): step 2/2.</text>
</comment>
<comment type="subunit">
    <text evidence="1">Homodimer.</text>
</comment>
<comment type="subcellular location">
    <subcellularLocation>
        <location evidence="1">Cytoplasm</location>
    </subcellularLocation>
</comment>
<comment type="similarity">
    <text evidence="1">Belongs to the class-III pyridoxal-phosphate-dependent aminotransferase family. HemL subfamily.</text>
</comment>
<sequence>MTDSNTLFSRAQQVIPGGVNSPVRAFKGVGGTPVFIQKAKGAYIWDTDDKQYVDYVGSWGPMILGHNHPAILSAVIKTAENGLSFGAPTPIEIDLAELVCKLIPSMEMVRMVSSGTEATMSAIRLARGYTNRDKIIKFEGCYHGHADSLLVKAGSGALTLGQPNSPGVPADFAKHTLTCTYNDLESVKQAFEQYPQDIACIIVEPVAGNMNCVPPQNNFLQGLRELCNQYGAVFIIDEVMTGFRVALGGAQSYYNVEPDLTCLGKVIGGGMPVGAFGGKKEIMQFIAPTGPVYQAGTLSGNPIAMAAGLACLTELQKAGNQERLAQLTEKLALGLKALADKHHVPFTVNYVGGMFGLFFTDKAQVTCYQDVMACDTEKFKVFFHKMLDEGVYLAPSAFEAGFMSLAHTDADIDRTLTAADKAFAALA</sequence>
<organism>
    <name type="scientific">Mannheimia succiniciproducens (strain KCTC 0769BP / MBEL55E)</name>
    <dbReference type="NCBI Taxonomy" id="221988"/>
    <lineage>
        <taxon>Bacteria</taxon>
        <taxon>Pseudomonadati</taxon>
        <taxon>Pseudomonadota</taxon>
        <taxon>Gammaproteobacteria</taxon>
        <taxon>Pasteurellales</taxon>
        <taxon>Pasteurellaceae</taxon>
        <taxon>Basfia</taxon>
    </lineage>
</organism>
<accession>Q65U43</accession>
<evidence type="ECO:0000255" key="1">
    <source>
        <dbReference type="HAMAP-Rule" id="MF_00375"/>
    </source>
</evidence>
<dbReference type="EC" id="5.4.3.8" evidence="1"/>
<dbReference type="EMBL" id="AE016827">
    <property type="protein sequence ID" value="AAU37517.1"/>
    <property type="molecule type" value="Genomic_DNA"/>
</dbReference>
<dbReference type="RefSeq" id="WP_011200087.1">
    <property type="nucleotide sequence ID" value="NC_006300.1"/>
</dbReference>
<dbReference type="SMR" id="Q65U43"/>
<dbReference type="STRING" id="221988.MS0910"/>
<dbReference type="KEGG" id="msu:MS0910"/>
<dbReference type="eggNOG" id="COG0001">
    <property type="taxonomic scope" value="Bacteria"/>
</dbReference>
<dbReference type="HOGENOM" id="CLU_016922_1_5_6"/>
<dbReference type="OrthoDB" id="9801052at2"/>
<dbReference type="UniPathway" id="UPA00251">
    <property type="reaction ID" value="UER00317"/>
</dbReference>
<dbReference type="Proteomes" id="UP000000607">
    <property type="component" value="Chromosome"/>
</dbReference>
<dbReference type="GO" id="GO:0005737">
    <property type="term" value="C:cytoplasm"/>
    <property type="evidence" value="ECO:0007669"/>
    <property type="project" value="UniProtKB-SubCell"/>
</dbReference>
<dbReference type="GO" id="GO:0042286">
    <property type="term" value="F:glutamate-1-semialdehyde 2,1-aminomutase activity"/>
    <property type="evidence" value="ECO:0007669"/>
    <property type="project" value="UniProtKB-UniRule"/>
</dbReference>
<dbReference type="GO" id="GO:0030170">
    <property type="term" value="F:pyridoxal phosphate binding"/>
    <property type="evidence" value="ECO:0007669"/>
    <property type="project" value="InterPro"/>
</dbReference>
<dbReference type="GO" id="GO:0008483">
    <property type="term" value="F:transaminase activity"/>
    <property type="evidence" value="ECO:0007669"/>
    <property type="project" value="InterPro"/>
</dbReference>
<dbReference type="GO" id="GO:0006782">
    <property type="term" value="P:protoporphyrinogen IX biosynthetic process"/>
    <property type="evidence" value="ECO:0007669"/>
    <property type="project" value="UniProtKB-UniRule"/>
</dbReference>
<dbReference type="CDD" id="cd00610">
    <property type="entry name" value="OAT_like"/>
    <property type="match status" value="1"/>
</dbReference>
<dbReference type="FunFam" id="3.40.640.10:FF:000021">
    <property type="entry name" value="Glutamate-1-semialdehyde 2,1-aminomutase"/>
    <property type="match status" value="1"/>
</dbReference>
<dbReference type="FunFam" id="3.90.1150.10:FF:000012">
    <property type="entry name" value="Glutamate-1-semialdehyde 2,1-aminomutase"/>
    <property type="match status" value="1"/>
</dbReference>
<dbReference type="Gene3D" id="3.90.1150.10">
    <property type="entry name" value="Aspartate Aminotransferase, domain 1"/>
    <property type="match status" value="1"/>
</dbReference>
<dbReference type="Gene3D" id="3.40.640.10">
    <property type="entry name" value="Type I PLP-dependent aspartate aminotransferase-like (Major domain)"/>
    <property type="match status" value="1"/>
</dbReference>
<dbReference type="HAMAP" id="MF_00375">
    <property type="entry name" value="HemL_aminotrans_3"/>
    <property type="match status" value="1"/>
</dbReference>
<dbReference type="InterPro" id="IPR004639">
    <property type="entry name" value="4pyrrol_synth_GluAld_NH2Trfase"/>
</dbReference>
<dbReference type="InterPro" id="IPR005814">
    <property type="entry name" value="Aminotrans_3"/>
</dbReference>
<dbReference type="InterPro" id="IPR049704">
    <property type="entry name" value="Aminotrans_3_PPA_site"/>
</dbReference>
<dbReference type="InterPro" id="IPR015424">
    <property type="entry name" value="PyrdxlP-dep_Trfase"/>
</dbReference>
<dbReference type="InterPro" id="IPR015421">
    <property type="entry name" value="PyrdxlP-dep_Trfase_major"/>
</dbReference>
<dbReference type="InterPro" id="IPR015422">
    <property type="entry name" value="PyrdxlP-dep_Trfase_small"/>
</dbReference>
<dbReference type="NCBIfam" id="TIGR00713">
    <property type="entry name" value="hemL"/>
    <property type="match status" value="1"/>
</dbReference>
<dbReference type="NCBIfam" id="NF000818">
    <property type="entry name" value="PRK00062.1"/>
    <property type="match status" value="1"/>
</dbReference>
<dbReference type="PANTHER" id="PTHR43713">
    <property type="entry name" value="GLUTAMATE-1-SEMIALDEHYDE 2,1-AMINOMUTASE"/>
    <property type="match status" value="1"/>
</dbReference>
<dbReference type="PANTHER" id="PTHR43713:SF3">
    <property type="entry name" value="GLUTAMATE-1-SEMIALDEHYDE 2,1-AMINOMUTASE 1, CHLOROPLASTIC-RELATED"/>
    <property type="match status" value="1"/>
</dbReference>
<dbReference type="Pfam" id="PF00202">
    <property type="entry name" value="Aminotran_3"/>
    <property type="match status" value="1"/>
</dbReference>
<dbReference type="PIRSF" id="PIRSF000521">
    <property type="entry name" value="Transaminase_4ab_Lys_Orn"/>
    <property type="match status" value="1"/>
</dbReference>
<dbReference type="SUPFAM" id="SSF53383">
    <property type="entry name" value="PLP-dependent transferases"/>
    <property type="match status" value="1"/>
</dbReference>
<dbReference type="PROSITE" id="PS00600">
    <property type="entry name" value="AA_TRANSFER_CLASS_3"/>
    <property type="match status" value="1"/>
</dbReference>
<reference key="1">
    <citation type="journal article" date="2004" name="Nat. Biotechnol.">
        <title>The genome sequence of the capnophilic rumen bacterium Mannheimia succiniciproducens.</title>
        <authorList>
            <person name="Hong S.H."/>
            <person name="Kim J.S."/>
            <person name="Lee S.Y."/>
            <person name="In Y.H."/>
            <person name="Choi S.S."/>
            <person name="Rih J.-K."/>
            <person name="Kim C.H."/>
            <person name="Jeong H."/>
            <person name="Hur C.G."/>
            <person name="Kim J.J."/>
        </authorList>
    </citation>
    <scope>NUCLEOTIDE SEQUENCE [LARGE SCALE GENOMIC DNA]</scope>
    <source>
        <strain>KCTC 0769BP / MBEL55E</strain>
    </source>
</reference>